<reference key="1">
    <citation type="journal article" date="1998" name="J. Biol. Chem.">
        <title>New insights into the co-evolution of cytochrome c reductase and the mitochondrial processing peptidase.</title>
        <authorList>
            <person name="Brumme S."/>
            <person name="Kruft V."/>
            <person name="Schmitz U.K."/>
            <person name="Braun H.P."/>
        </authorList>
    </citation>
    <scope>PROTEIN SEQUENCE</scope>
</reference>
<accession>P81247</accession>
<comment type="function">
    <text evidence="1">Component of the ubiquinol-cytochrome c oxidoreductase, a multisubunit transmembrane complex that is part of the mitochondrial electron transport chain which drives oxidative phosphorylation. The respiratory chain contains 3 multisubunit complexes succinate dehydrogenase (complex II, CII), ubiquinol-cytochrome c oxidoreductase (cytochrome b-c1 complex, complex III, CIII) and cytochrome c oxidase (complex IV, CIV), that cooperate to transfer electrons derived from NADH and succinate to molecular oxygen, creating an electrochemical gradient over the inner membrane that drives transmembrane transport and the ATP synthase. The cytochrome b-c1 complex catalyzes electron transfer from ubiquinol to cytochrome c, linking this redox reaction to translocation of protons across the mitochondrial inner membrane, with protons being carried across the membrane as hydrogens on the quinol. In the process called Q cycle, 2 protons are consumed from the matrix, 4 protons are released into the intermembrane space and 2 electrons are passed to cytochrome c.</text>
</comment>
<comment type="subunit">
    <text evidence="1">Component of the ubiquinol-cytochrome c oxidoreductase (cytochrome b-c1 complex, complex III, CIII), a multisubunit enzyme composed of 3 respiratory subunits cytochrome b, cytochrome c1 and Rieske protein, 2 core protein subunits, and additional low-molecular weight protein subunits. The complex exists as an obligatory dimer and forms supercomplexes (SCs) in the inner mitochondrial membrane with cytochrome c oxidase (complex IV, CIV).</text>
</comment>
<comment type="subcellular location">
    <subcellularLocation>
        <location evidence="1">Mitochondrion inner membrane</location>
        <topology evidence="1">Single-pass membrane protein</topology>
    </subcellularLocation>
</comment>
<comment type="similarity">
    <text evidence="2">Belongs to the UQCRQ/QCR8 family.</text>
</comment>
<name>QCR8_EQUAR</name>
<proteinExistence type="evidence at protein level"/>
<dbReference type="GO" id="GO:0005743">
    <property type="term" value="C:mitochondrial inner membrane"/>
    <property type="evidence" value="ECO:0007669"/>
    <property type="project" value="UniProtKB-SubCell"/>
</dbReference>
<dbReference type="GO" id="GO:0098803">
    <property type="term" value="C:respiratory chain complex"/>
    <property type="evidence" value="ECO:0007669"/>
    <property type="project" value="InterPro"/>
</dbReference>
<dbReference type="InterPro" id="IPR020101">
    <property type="entry name" value="Cyt_b-c1_8-plants"/>
</dbReference>
<dbReference type="Pfam" id="PF10890">
    <property type="entry name" value="Cyt_b-c1_8"/>
    <property type="match status" value="1"/>
</dbReference>
<keyword id="KW-0903">Direct protein sequencing</keyword>
<keyword id="KW-0249">Electron transport</keyword>
<keyword id="KW-0472">Membrane</keyword>
<keyword id="KW-0496">Mitochondrion</keyword>
<keyword id="KW-0999">Mitochondrion inner membrane</keyword>
<keyword id="KW-0679">Respiratory chain</keyword>
<keyword id="KW-0813">Transport</keyword>
<feature type="chain" id="PRO_0000193547" description="Cytochrome b-c1 complex subunit 8">
    <location>
        <begin position="1"/>
        <end position="20" status="greater than"/>
    </location>
</feature>
<feature type="non-terminal residue">
    <location>
        <position position="20"/>
    </location>
</feature>
<protein>
    <recommendedName>
        <fullName>Cytochrome b-c1 complex subunit 8</fullName>
    </recommendedName>
    <alternativeName>
        <fullName>Complex III subunit 8</fullName>
    </alternativeName>
    <alternativeName>
        <fullName>Complex III subunit VII</fullName>
    </alternativeName>
    <alternativeName>
        <fullName>Ubiquinol-cytochrome c reductase complex 9.5 kDa protein</fullName>
    </alternativeName>
    <alternativeName>
        <fullName>Ubiquinol-cytochrome c reductase complex ubiquinone-binding protein QP-C</fullName>
    </alternativeName>
</protein>
<sequence>QKVAVRLKEVVYTLSPHQQN</sequence>
<gene>
    <name type="primary">QCR8</name>
</gene>
<organism>
    <name type="scientific">Equisetum arvense</name>
    <name type="common">Field horsetail</name>
    <name type="synonym">Common horsetail</name>
    <dbReference type="NCBI Taxonomy" id="3258"/>
    <lineage>
        <taxon>Eukaryota</taxon>
        <taxon>Viridiplantae</taxon>
        <taxon>Streptophyta</taxon>
        <taxon>Embryophyta</taxon>
        <taxon>Tracheophyta</taxon>
        <taxon>Polypodiopsida</taxon>
        <taxon>Equisetidae</taxon>
        <taxon>Equisetales</taxon>
        <taxon>Equisetaceae</taxon>
        <taxon>Equisetum</taxon>
    </lineage>
</organism>
<evidence type="ECO:0000250" key="1">
    <source>
        <dbReference type="UniProtKB" id="P08525"/>
    </source>
</evidence>
<evidence type="ECO:0000305" key="2"/>